<proteinExistence type="inferred from homology"/>
<organism>
    <name type="scientific">Xanthomonas campestris pv. campestris (strain ATCC 33913 / DSM 3586 / NCPPB 528 / LMG 568 / P 25)</name>
    <dbReference type="NCBI Taxonomy" id="190485"/>
    <lineage>
        <taxon>Bacteria</taxon>
        <taxon>Pseudomonadati</taxon>
        <taxon>Pseudomonadota</taxon>
        <taxon>Gammaproteobacteria</taxon>
        <taxon>Lysobacterales</taxon>
        <taxon>Lysobacteraceae</taxon>
        <taxon>Xanthomonas</taxon>
    </lineage>
</organism>
<dbReference type="EC" id="5.3.1.23" evidence="1"/>
<dbReference type="EMBL" id="AE008922">
    <property type="protein sequence ID" value="AAM40868.1"/>
    <property type="molecule type" value="Genomic_DNA"/>
</dbReference>
<dbReference type="RefSeq" id="NP_636944.1">
    <property type="nucleotide sequence ID" value="NC_003902.1"/>
</dbReference>
<dbReference type="RefSeq" id="WP_011036755.1">
    <property type="nucleotide sequence ID" value="NC_003902.1"/>
</dbReference>
<dbReference type="SMR" id="Q8PAB2"/>
<dbReference type="STRING" id="190485.XCC1573"/>
<dbReference type="EnsemblBacteria" id="AAM40868">
    <property type="protein sequence ID" value="AAM40868"/>
    <property type="gene ID" value="XCC1573"/>
</dbReference>
<dbReference type="KEGG" id="xcc:XCC1573"/>
<dbReference type="PATRIC" id="fig|190485.4.peg.1686"/>
<dbReference type="eggNOG" id="COG0182">
    <property type="taxonomic scope" value="Bacteria"/>
</dbReference>
<dbReference type="HOGENOM" id="CLU_016218_1_2_6"/>
<dbReference type="OrthoDB" id="9803436at2"/>
<dbReference type="UniPathway" id="UPA00904">
    <property type="reaction ID" value="UER00874"/>
</dbReference>
<dbReference type="Proteomes" id="UP000001010">
    <property type="component" value="Chromosome"/>
</dbReference>
<dbReference type="GO" id="GO:0046523">
    <property type="term" value="F:S-methyl-5-thioribose-1-phosphate isomerase activity"/>
    <property type="evidence" value="ECO:0000318"/>
    <property type="project" value="GO_Central"/>
</dbReference>
<dbReference type="GO" id="GO:0019509">
    <property type="term" value="P:L-methionine salvage from methylthioadenosine"/>
    <property type="evidence" value="ECO:0000318"/>
    <property type="project" value="GO_Central"/>
</dbReference>
<dbReference type="FunFam" id="1.20.120.420:FF:000007">
    <property type="entry name" value="Methylthioribose-1-phosphate isomerase"/>
    <property type="match status" value="1"/>
</dbReference>
<dbReference type="FunFam" id="3.40.50.10470:FF:000006">
    <property type="entry name" value="Methylthioribose-1-phosphate isomerase"/>
    <property type="match status" value="1"/>
</dbReference>
<dbReference type="Gene3D" id="1.20.120.420">
    <property type="entry name" value="translation initiation factor eif-2b, domain 1"/>
    <property type="match status" value="1"/>
</dbReference>
<dbReference type="Gene3D" id="3.40.50.10470">
    <property type="entry name" value="Translation initiation factor eif-2b, domain 2"/>
    <property type="match status" value="1"/>
</dbReference>
<dbReference type="HAMAP" id="MF_01678">
    <property type="entry name" value="Salvage_MtnA"/>
    <property type="match status" value="1"/>
</dbReference>
<dbReference type="InterPro" id="IPR000649">
    <property type="entry name" value="IF-2B-related"/>
</dbReference>
<dbReference type="InterPro" id="IPR005251">
    <property type="entry name" value="IF-M1Pi"/>
</dbReference>
<dbReference type="InterPro" id="IPR042529">
    <property type="entry name" value="IF_2B-like_C"/>
</dbReference>
<dbReference type="InterPro" id="IPR011559">
    <property type="entry name" value="Initiation_fac_2B_a/b/d"/>
</dbReference>
<dbReference type="InterPro" id="IPR027363">
    <property type="entry name" value="M1Pi_N"/>
</dbReference>
<dbReference type="InterPro" id="IPR037171">
    <property type="entry name" value="NagB/RpiA_transferase-like"/>
</dbReference>
<dbReference type="NCBIfam" id="TIGR00524">
    <property type="entry name" value="eIF-2B_rel"/>
    <property type="match status" value="1"/>
</dbReference>
<dbReference type="NCBIfam" id="NF004326">
    <property type="entry name" value="PRK05720.1"/>
    <property type="match status" value="1"/>
</dbReference>
<dbReference type="NCBIfam" id="TIGR00512">
    <property type="entry name" value="salvage_mtnA"/>
    <property type="match status" value="1"/>
</dbReference>
<dbReference type="PANTHER" id="PTHR43475">
    <property type="entry name" value="METHYLTHIORIBOSE-1-PHOSPHATE ISOMERASE"/>
    <property type="match status" value="1"/>
</dbReference>
<dbReference type="PANTHER" id="PTHR43475:SF1">
    <property type="entry name" value="METHYLTHIORIBOSE-1-PHOSPHATE ISOMERASE"/>
    <property type="match status" value="1"/>
</dbReference>
<dbReference type="Pfam" id="PF01008">
    <property type="entry name" value="IF-2B"/>
    <property type="match status" value="1"/>
</dbReference>
<dbReference type="SUPFAM" id="SSF100950">
    <property type="entry name" value="NagB/RpiA/CoA transferase-like"/>
    <property type="match status" value="1"/>
</dbReference>
<reference key="1">
    <citation type="journal article" date="2002" name="Nature">
        <title>Comparison of the genomes of two Xanthomonas pathogens with differing host specificities.</title>
        <authorList>
            <person name="da Silva A.C.R."/>
            <person name="Ferro J.A."/>
            <person name="Reinach F.C."/>
            <person name="Farah C.S."/>
            <person name="Furlan L.R."/>
            <person name="Quaggio R.B."/>
            <person name="Monteiro-Vitorello C.B."/>
            <person name="Van Sluys M.A."/>
            <person name="Almeida N.F. Jr."/>
            <person name="Alves L.M.C."/>
            <person name="do Amaral A.M."/>
            <person name="Bertolini M.C."/>
            <person name="Camargo L.E.A."/>
            <person name="Camarotte G."/>
            <person name="Cannavan F."/>
            <person name="Cardozo J."/>
            <person name="Chambergo F."/>
            <person name="Ciapina L.P."/>
            <person name="Cicarelli R.M.B."/>
            <person name="Coutinho L.L."/>
            <person name="Cursino-Santos J.R."/>
            <person name="El-Dorry H."/>
            <person name="Faria J.B."/>
            <person name="Ferreira A.J.S."/>
            <person name="Ferreira R.C.C."/>
            <person name="Ferro M.I.T."/>
            <person name="Formighieri E.F."/>
            <person name="Franco M.C."/>
            <person name="Greggio C.C."/>
            <person name="Gruber A."/>
            <person name="Katsuyama A.M."/>
            <person name="Kishi L.T."/>
            <person name="Leite R.P."/>
            <person name="Lemos E.G.M."/>
            <person name="Lemos M.V.F."/>
            <person name="Locali E.C."/>
            <person name="Machado M.A."/>
            <person name="Madeira A.M.B.N."/>
            <person name="Martinez-Rossi N.M."/>
            <person name="Martins E.C."/>
            <person name="Meidanis J."/>
            <person name="Menck C.F.M."/>
            <person name="Miyaki C.Y."/>
            <person name="Moon D.H."/>
            <person name="Moreira L.M."/>
            <person name="Novo M.T.M."/>
            <person name="Okura V.K."/>
            <person name="Oliveira M.C."/>
            <person name="Oliveira V.R."/>
            <person name="Pereira H.A."/>
            <person name="Rossi A."/>
            <person name="Sena J.A.D."/>
            <person name="Silva C."/>
            <person name="de Souza R.F."/>
            <person name="Spinola L.A.F."/>
            <person name="Takita M.A."/>
            <person name="Tamura R.E."/>
            <person name="Teixeira E.C."/>
            <person name="Tezza R.I.D."/>
            <person name="Trindade dos Santos M."/>
            <person name="Truffi D."/>
            <person name="Tsai S.M."/>
            <person name="White F.F."/>
            <person name="Setubal J.C."/>
            <person name="Kitajima J.P."/>
        </authorList>
    </citation>
    <scope>NUCLEOTIDE SEQUENCE [LARGE SCALE GENOMIC DNA]</scope>
    <source>
        <strain>ATCC 33913 / DSM 3586 / NCPPB 528 / LMG 568 / P 25</strain>
    </source>
</reference>
<gene>
    <name evidence="1" type="primary">mtnA</name>
    <name type="ordered locus">XCC1573</name>
</gene>
<sequence length="354" mass="37410">MNDSAHIDYARYDHIRPLLWTGDALELLDQRKLPFVVEHVRCDSSDAVAEAIHSLAVRGAPAIGIAAGWGVVLAAREIAADSGSEALQKLEPALLRLNAARPTAVNLAWALMRMRRVLAAAGPDWRDVLAREAQAIADEDLAANRHMGALGAGLIAPGSGVLTHCNTGSLATAGFGTALGVIRAGMAQQRISKVFAGETRPWLQGARLTVWELQQDGIDATLIADSAASHLMKSGLVQWVIVGADRICANGDTANKIGSYQLAIAARHHGVKFMVVAPSSTVDMATADGDQIEIEQRDPGELFGVGGVRTVADGIHAWNPVFDVTPGHLIDAIVTERGVIAQPDLARMQAAFGN</sequence>
<keyword id="KW-0028">Amino-acid biosynthesis</keyword>
<keyword id="KW-0413">Isomerase</keyword>
<keyword id="KW-0486">Methionine biosynthesis</keyword>
<keyword id="KW-1185">Reference proteome</keyword>
<accession>Q8PAB2</accession>
<name>MTNA_XANCP</name>
<protein>
    <recommendedName>
        <fullName evidence="1">Methylthioribose-1-phosphate isomerase</fullName>
        <shortName evidence="1">M1Pi</shortName>
        <shortName evidence="1">MTR-1-P isomerase</shortName>
        <ecNumber evidence="1">5.3.1.23</ecNumber>
    </recommendedName>
    <alternativeName>
        <fullName evidence="1">S-methyl-5-thioribose-1-phosphate isomerase</fullName>
    </alternativeName>
</protein>
<feature type="chain" id="PRO_0000357268" description="Methylthioribose-1-phosphate isomerase">
    <location>
        <begin position="1"/>
        <end position="354"/>
    </location>
</feature>
<feature type="active site" description="Proton donor" evidence="1">
    <location>
        <position position="245"/>
    </location>
</feature>
<feature type="binding site" evidence="1">
    <location>
        <begin position="58"/>
        <end position="60"/>
    </location>
    <ligand>
        <name>substrate</name>
    </ligand>
</feature>
<feature type="binding site" evidence="1">
    <location>
        <position position="101"/>
    </location>
    <ligand>
        <name>substrate</name>
    </ligand>
</feature>
<feature type="binding site" evidence="1">
    <location>
        <position position="204"/>
    </location>
    <ligand>
        <name>substrate</name>
    </ligand>
</feature>
<feature type="binding site" evidence="1">
    <location>
        <begin position="255"/>
        <end position="256"/>
    </location>
    <ligand>
        <name>substrate</name>
    </ligand>
</feature>
<feature type="site" description="Transition state stabilizer" evidence="1">
    <location>
        <position position="165"/>
    </location>
</feature>
<comment type="function">
    <text evidence="1">Catalyzes the interconversion of methylthioribose-1-phosphate (MTR-1-P) into methylthioribulose-1-phosphate (MTRu-1-P).</text>
</comment>
<comment type="catalytic activity">
    <reaction evidence="1">
        <text>5-(methylsulfanyl)-alpha-D-ribose 1-phosphate = 5-(methylsulfanyl)-D-ribulose 1-phosphate</text>
        <dbReference type="Rhea" id="RHEA:19989"/>
        <dbReference type="ChEBI" id="CHEBI:58533"/>
        <dbReference type="ChEBI" id="CHEBI:58548"/>
        <dbReference type="EC" id="5.3.1.23"/>
    </reaction>
</comment>
<comment type="pathway">
    <text evidence="1">Amino-acid biosynthesis; L-methionine biosynthesis via salvage pathway; L-methionine from S-methyl-5-thio-alpha-D-ribose 1-phosphate: step 1/6.</text>
</comment>
<comment type="similarity">
    <text evidence="2">Belongs to the eIF-2B alpha/beta/delta subunits family. MtnA subfamily.</text>
</comment>
<evidence type="ECO:0000255" key="1">
    <source>
        <dbReference type="HAMAP-Rule" id="MF_01678"/>
    </source>
</evidence>
<evidence type="ECO:0000305" key="2"/>